<reference key="1">
    <citation type="journal article" date="1997" name="Nature">
        <title>The complete genome sequence of the hyperthermophilic, sulphate-reducing archaeon Archaeoglobus fulgidus.</title>
        <authorList>
            <person name="Klenk H.-P."/>
            <person name="Clayton R.A."/>
            <person name="Tomb J.-F."/>
            <person name="White O."/>
            <person name="Nelson K.E."/>
            <person name="Ketchum K.A."/>
            <person name="Dodson R.J."/>
            <person name="Gwinn M.L."/>
            <person name="Hickey E.K."/>
            <person name="Peterson J.D."/>
            <person name="Richardson D.L."/>
            <person name="Kerlavage A.R."/>
            <person name="Graham D.E."/>
            <person name="Kyrpides N.C."/>
            <person name="Fleischmann R.D."/>
            <person name="Quackenbush J."/>
            <person name="Lee N.H."/>
            <person name="Sutton G.G."/>
            <person name="Gill S.R."/>
            <person name="Kirkness E.F."/>
            <person name="Dougherty B.A."/>
            <person name="McKenney K."/>
            <person name="Adams M.D."/>
            <person name="Loftus B.J."/>
            <person name="Peterson S.N."/>
            <person name="Reich C.I."/>
            <person name="McNeil L.K."/>
            <person name="Badger J.H."/>
            <person name="Glodek A."/>
            <person name="Zhou L."/>
            <person name="Overbeek R."/>
            <person name="Gocayne J.D."/>
            <person name="Weidman J.F."/>
            <person name="McDonald L.A."/>
            <person name="Utterback T.R."/>
            <person name="Cotton M.D."/>
            <person name="Spriggs T."/>
            <person name="Artiach P."/>
            <person name="Kaine B.P."/>
            <person name="Sykes S.M."/>
            <person name="Sadow P.W."/>
            <person name="D'Andrea K.P."/>
            <person name="Bowman C."/>
            <person name="Fujii C."/>
            <person name="Garland S.A."/>
            <person name="Mason T.M."/>
            <person name="Olsen G.J."/>
            <person name="Fraser C.M."/>
            <person name="Smith H.O."/>
            <person name="Woese C.R."/>
            <person name="Venter J.C."/>
        </authorList>
    </citation>
    <scope>NUCLEOTIDE SEQUENCE [LARGE SCALE GENOMIC DNA]</scope>
    <source>
        <strain>ATCC 49558 / DSM 4304 / JCM 9628 / NBRC 100126 / VC-16</strain>
    </source>
</reference>
<accession>O29782</accession>
<feature type="chain" id="PRO_0000099941" description="2-oxoglutarate synthase subunit KorB">
    <location>
        <begin position="1"/>
        <end position="267"/>
    </location>
</feature>
<keyword id="KW-0560">Oxidoreductase</keyword>
<keyword id="KW-1185">Reference proteome</keyword>
<sequence>MKAEYADYLRTEMLPTIWCAGCPNGIVLASFIRAVKRGFERDKTVVVSGIGCSGRITQYLDFETVHTTHGRALAFATGIKLAKPELNVVVFMGDGDAVAIGGNHFIHACRRNIDLTAVVINNSLYGMTGGQLAPTTPEGAKTKTSPYGNVERPFDIAKLAIAAGASYVARFTAYQPRWIEKAIFEAMQHHGFSVVEVVTGCPTHQRIKPADLLKHLKENFRRRDNVSLDEIQPTDIGVFKKEVMEEFCEKIEKLRMYVRKGENKENV</sequence>
<proteinExistence type="predicted"/>
<protein>
    <recommendedName>
        <fullName>2-oxoglutarate synthase subunit KorB</fullName>
        <ecNumber>1.2.7.3</ecNumber>
    </recommendedName>
    <alternativeName>
        <fullName>2-ketoglutarate oxidoreductase beta chain</fullName>
        <shortName>KOR</shortName>
    </alternativeName>
    <alternativeName>
        <fullName>2-oxoglutarate-ferredoxin oxidoreductase subunit beta</fullName>
    </alternativeName>
</protein>
<gene>
    <name type="primary">korB</name>
    <name type="ordered locus">AF_0468</name>
</gene>
<name>KORB_ARCFU</name>
<organism>
    <name type="scientific">Archaeoglobus fulgidus (strain ATCC 49558 / DSM 4304 / JCM 9628 / NBRC 100126 / VC-16)</name>
    <dbReference type="NCBI Taxonomy" id="224325"/>
    <lineage>
        <taxon>Archaea</taxon>
        <taxon>Methanobacteriati</taxon>
        <taxon>Methanobacteriota</taxon>
        <taxon>Archaeoglobi</taxon>
        <taxon>Archaeoglobales</taxon>
        <taxon>Archaeoglobaceae</taxon>
        <taxon>Archaeoglobus</taxon>
    </lineage>
</organism>
<dbReference type="EC" id="1.2.7.3"/>
<dbReference type="EMBL" id="AE000782">
    <property type="protein sequence ID" value="AAB90769.1"/>
    <property type="molecule type" value="Genomic_DNA"/>
</dbReference>
<dbReference type="PIR" id="D69308">
    <property type="entry name" value="D69308"/>
</dbReference>
<dbReference type="RefSeq" id="WP_010877975.1">
    <property type="nucleotide sequence ID" value="NC_000917.1"/>
</dbReference>
<dbReference type="SMR" id="O29782"/>
<dbReference type="STRING" id="224325.AF_0468"/>
<dbReference type="PaxDb" id="224325-AF_0468"/>
<dbReference type="EnsemblBacteria" id="AAB90769">
    <property type="protein sequence ID" value="AAB90769"/>
    <property type="gene ID" value="AF_0468"/>
</dbReference>
<dbReference type="KEGG" id="afu:AF_0468"/>
<dbReference type="eggNOG" id="arCOG01599">
    <property type="taxonomic scope" value="Archaea"/>
</dbReference>
<dbReference type="HOGENOM" id="CLU_048564_2_0_2"/>
<dbReference type="OrthoDB" id="30755at2157"/>
<dbReference type="PhylomeDB" id="O29782"/>
<dbReference type="Proteomes" id="UP000002199">
    <property type="component" value="Chromosome"/>
</dbReference>
<dbReference type="GO" id="GO:0047553">
    <property type="term" value="F:2-oxoglutarate synthase activity"/>
    <property type="evidence" value="ECO:0007669"/>
    <property type="project" value="UniProtKB-EC"/>
</dbReference>
<dbReference type="GO" id="GO:0030976">
    <property type="term" value="F:thiamine pyrophosphate binding"/>
    <property type="evidence" value="ECO:0007669"/>
    <property type="project" value="InterPro"/>
</dbReference>
<dbReference type="GO" id="GO:0006082">
    <property type="term" value="P:organic acid metabolic process"/>
    <property type="evidence" value="ECO:0007669"/>
    <property type="project" value="UniProtKB-ARBA"/>
</dbReference>
<dbReference type="GO" id="GO:0044272">
    <property type="term" value="P:sulfur compound biosynthetic process"/>
    <property type="evidence" value="ECO:0007669"/>
    <property type="project" value="UniProtKB-ARBA"/>
</dbReference>
<dbReference type="CDD" id="cd03375">
    <property type="entry name" value="TPP_OGFOR"/>
    <property type="match status" value="1"/>
</dbReference>
<dbReference type="Gene3D" id="3.40.50.970">
    <property type="match status" value="1"/>
</dbReference>
<dbReference type="InterPro" id="IPR051457">
    <property type="entry name" value="2-oxoacid:Fd_oxidoreductase"/>
</dbReference>
<dbReference type="InterPro" id="IPR029061">
    <property type="entry name" value="THDP-binding"/>
</dbReference>
<dbReference type="InterPro" id="IPR011766">
    <property type="entry name" value="TPP_enzyme_TPP-bd"/>
</dbReference>
<dbReference type="PANTHER" id="PTHR48084">
    <property type="entry name" value="2-OXOGLUTARATE OXIDOREDUCTASE SUBUNIT KORB-RELATED"/>
    <property type="match status" value="1"/>
</dbReference>
<dbReference type="PANTHER" id="PTHR48084:SF1">
    <property type="entry name" value="2-OXOGLUTARATE SYNTHASE SUBUNIT KORB"/>
    <property type="match status" value="1"/>
</dbReference>
<dbReference type="Pfam" id="PF02775">
    <property type="entry name" value="TPP_enzyme_C"/>
    <property type="match status" value="1"/>
</dbReference>
<dbReference type="SUPFAM" id="SSF52518">
    <property type="entry name" value="Thiamin diphosphate-binding fold (THDP-binding)"/>
    <property type="match status" value="1"/>
</dbReference>
<comment type="catalytic activity">
    <reaction>
        <text>2 oxidized [2Fe-2S]-[ferredoxin] + 2-oxoglutarate + CoA = succinyl-CoA + 2 reduced [2Fe-2S]-[ferredoxin] + CO2 + H(+)</text>
        <dbReference type="Rhea" id="RHEA:17297"/>
        <dbReference type="Rhea" id="RHEA-COMP:10000"/>
        <dbReference type="Rhea" id="RHEA-COMP:10001"/>
        <dbReference type="ChEBI" id="CHEBI:15378"/>
        <dbReference type="ChEBI" id="CHEBI:16526"/>
        <dbReference type="ChEBI" id="CHEBI:16810"/>
        <dbReference type="ChEBI" id="CHEBI:33737"/>
        <dbReference type="ChEBI" id="CHEBI:33738"/>
        <dbReference type="ChEBI" id="CHEBI:57287"/>
        <dbReference type="ChEBI" id="CHEBI:57292"/>
        <dbReference type="EC" id="1.2.7.3"/>
    </reaction>
</comment>
<comment type="subunit">
    <text>Heterotetramer of the KorA, KorB, KorC and KorD subunits.</text>
</comment>